<accession>B1KGX9</accession>
<keyword id="KW-0067">ATP-binding</keyword>
<keyword id="KW-0963">Cytoplasm</keyword>
<keyword id="KW-0227">DNA damage</keyword>
<keyword id="KW-0233">DNA recombination</keyword>
<keyword id="KW-0234">DNA repair</keyword>
<keyword id="KW-0238">DNA-binding</keyword>
<keyword id="KW-0378">Hydrolase</keyword>
<keyword id="KW-0547">Nucleotide-binding</keyword>
<keyword id="KW-1185">Reference proteome</keyword>
<gene>
    <name evidence="1" type="primary">ruvB</name>
    <name type="ordered locus">Swoo_2571</name>
</gene>
<proteinExistence type="inferred from homology"/>
<reference key="1">
    <citation type="submission" date="2008-02" db="EMBL/GenBank/DDBJ databases">
        <title>Complete sequence of Shewanella woodyi ATCC 51908.</title>
        <authorList>
            <consortium name="US DOE Joint Genome Institute"/>
            <person name="Copeland A."/>
            <person name="Lucas S."/>
            <person name="Lapidus A."/>
            <person name="Glavina del Rio T."/>
            <person name="Dalin E."/>
            <person name="Tice H."/>
            <person name="Bruce D."/>
            <person name="Goodwin L."/>
            <person name="Pitluck S."/>
            <person name="Sims D."/>
            <person name="Brettin T."/>
            <person name="Detter J.C."/>
            <person name="Han C."/>
            <person name="Kuske C.R."/>
            <person name="Schmutz J."/>
            <person name="Larimer F."/>
            <person name="Land M."/>
            <person name="Hauser L."/>
            <person name="Kyrpides N."/>
            <person name="Lykidis A."/>
            <person name="Zhao J.-S."/>
            <person name="Richardson P."/>
        </authorList>
    </citation>
    <scope>NUCLEOTIDE SEQUENCE [LARGE SCALE GENOMIC DNA]</scope>
    <source>
        <strain>ATCC 51908 / MS32</strain>
    </source>
</reference>
<name>RUVB_SHEWM</name>
<evidence type="ECO:0000255" key="1">
    <source>
        <dbReference type="HAMAP-Rule" id="MF_00016"/>
    </source>
</evidence>
<dbReference type="EC" id="3.6.4.-" evidence="1"/>
<dbReference type="EMBL" id="CP000961">
    <property type="protein sequence ID" value="ACA86848.1"/>
    <property type="molecule type" value="Genomic_DNA"/>
</dbReference>
<dbReference type="RefSeq" id="WP_012325188.1">
    <property type="nucleotide sequence ID" value="NC_010506.1"/>
</dbReference>
<dbReference type="SMR" id="B1KGX9"/>
<dbReference type="STRING" id="392500.Swoo_2571"/>
<dbReference type="KEGG" id="swd:Swoo_2571"/>
<dbReference type="eggNOG" id="COG2255">
    <property type="taxonomic scope" value="Bacteria"/>
</dbReference>
<dbReference type="HOGENOM" id="CLU_055599_1_0_6"/>
<dbReference type="Proteomes" id="UP000002168">
    <property type="component" value="Chromosome"/>
</dbReference>
<dbReference type="GO" id="GO:0005737">
    <property type="term" value="C:cytoplasm"/>
    <property type="evidence" value="ECO:0007669"/>
    <property type="project" value="UniProtKB-SubCell"/>
</dbReference>
<dbReference type="GO" id="GO:0048476">
    <property type="term" value="C:Holliday junction resolvase complex"/>
    <property type="evidence" value="ECO:0007669"/>
    <property type="project" value="UniProtKB-UniRule"/>
</dbReference>
<dbReference type="GO" id="GO:0005524">
    <property type="term" value="F:ATP binding"/>
    <property type="evidence" value="ECO:0007669"/>
    <property type="project" value="UniProtKB-UniRule"/>
</dbReference>
<dbReference type="GO" id="GO:0016887">
    <property type="term" value="F:ATP hydrolysis activity"/>
    <property type="evidence" value="ECO:0007669"/>
    <property type="project" value="InterPro"/>
</dbReference>
<dbReference type="GO" id="GO:0000400">
    <property type="term" value="F:four-way junction DNA binding"/>
    <property type="evidence" value="ECO:0007669"/>
    <property type="project" value="UniProtKB-UniRule"/>
</dbReference>
<dbReference type="GO" id="GO:0009378">
    <property type="term" value="F:four-way junction helicase activity"/>
    <property type="evidence" value="ECO:0007669"/>
    <property type="project" value="InterPro"/>
</dbReference>
<dbReference type="GO" id="GO:0006310">
    <property type="term" value="P:DNA recombination"/>
    <property type="evidence" value="ECO:0007669"/>
    <property type="project" value="UniProtKB-UniRule"/>
</dbReference>
<dbReference type="GO" id="GO:0006281">
    <property type="term" value="P:DNA repair"/>
    <property type="evidence" value="ECO:0007669"/>
    <property type="project" value="UniProtKB-UniRule"/>
</dbReference>
<dbReference type="CDD" id="cd00009">
    <property type="entry name" value="AAA"/>
    <property type="match status" value="1"/>
</dbReference>
<dbReference type="FunFam" id="1.10.10.10:FF:000086">
    <property type="entry name" value="Holliday junction ATP-dependent DNA helicase RuvB"/>
    <property type="match status" value="1"/>
</dbReference>
<dbReference type="FunFam" id="1.10.8.60:FF:000023">
    <property type="entry name" value="Holliday junction ATP-dependent DNA helicase RuvB"/>
    <property type="match status" value="1"/>
</dbReference>
<dbReference type="FunFam" id="3.40.50.300:FF:000073">
    <property type="entry name" value="Holliday junction ATP-dependent DNA helicase RuvB"/>
    <property type="match status" value="1"/>
</dbReference>
<dbReference type="Gene3D" id="1.10.8.60">
    <property type="match status" value="1"/>
</dbReference>
<dbReference type="Gene3D" id="3.40.50.300">
    <property type="entry name" value="P-loop containing nucleotide triphosphate hydrolases"/>
    <property type="match status" value="1"/>
</dbReference>
<dbReference type="Gene3D" id="1.10.10.10">
    <property type="entry name" value="Winged helix-like DNA-binding domain superfamily/Winged helix DNA-binding domain"/>
    <property type="match status" value="1"/>
</dbReference>
<dbReference type="HAMAP" id="MF_00016">
    <property type="entry name" value="DNA_HJ_migration_RuvB"/>
    <property type="match status" value="1"/>
</dbReference>
<dbReference type="InterPro" id="IPR003593">
    <property type="entry name" value="AAA+_ATPase"/>
</dbReference>
<dbReference type="InterPro" id="IPR041445">
    <property type="entry name" value="AAA_lid_4"/>
</dbReference>
<dbReference type="InterPro" id="IPR004605">
    <property type="entry name" value="DNA_helicase_Holl-junc_RuvB"/>
</dbReference>
<dbReference type="InterPro" id="IPR027417">
    <property type="entry name" value="P-loop_NTPase"/>
</dbReference>
<dbReference type="InterPro" id="IPR008824">
    <property type="entry name" value="RuvB-like_N"/>
</dbReference>
<dbReference type="InterPro" id="IPR008823">
    <property type="entry name" value="RuvB_C"/>
</dbReference>
<dbReference type="InterPro" id="IPR036388">
    <property type="entry name" value="WH-like_DNA-bd_sf"/>
</dbReference>
<dbReference type="InterPro" id="IPR036390">
    <property type="entry name" value="WH_DNA-bd_sf"/>
</dbReference>
<dbReference type="NCBIfam" id="NF000868">
    <property type="entry name" value="PRK00080.1"/>
    <property type="match status" value="1"/>
</dbReference>
<dbReference type="NCBIfam" id="TIGR00635">
    <property type="entry name" value="ruvB"/>
    <property type="match status" value="1"/>
</dbReference>
<dbReference type="PANTHER" id="PTHR42848">
    <property type="match status" value="1"/>
</dbReference>
<dbReference type="PANTHER" id="PTHR42848:SF1">
    <property type="entry name" value="HOLLIDAY JUNCTION BRANCH MIGRATION COMPLEX SUBUNIT RUVB"/>
    <property type="match status" value="1"/>
</dbReference>
<dbReference type="Pfam" id="PF17864">
    <property type="entry name" value="AAA_lid_4"/>
    <property type="match status" value="1"/>
</dbReference>
<dbReference type="Pfam" id="PF05491">
    <property type="entry name" value="RuvB_C"/>
    <property type="match status" value="1"/>
</dbReference>
<dbReference type="Pfam" id="PF05496">
    <property type="entry name" value="RuvB_N"/>
    <property type="match status" value="1"/>
</dbReference>
<dbReference type="SMART" id="SM00382">
    <property type="entry name" value="AAA"/>
    <property type="match status" value="1"/>
</dbReference>
<dbReference type="SUPFAM" id="SSF52540">
    <property type="entry name" value="P-loop containing nucleoside triphosphate hydrolases"/>
    <property type="match status" value="1"/>
</dbReference>
<dbReference type="SUPFAM" id="SSF46785">
    <property type="entry name" value="Winged helix' DNA-binding domain"/>
    <property type="match status" value="1"/>
</dbReference>
<sequence length="338" mass="37683">MIEADRLIHAEPQGIEERDEQIDRAMRPKMLDEYTGQDDSRAQLKIFIQAAQNRDEALDHMLIYGPPGLGKTTLAMIVANEMGVNIKSTSGPVLEKAGDLAALLTNLEPGDVLFIDEIHRLSSVVEEILYPAMEDYQLDIMIGEGPAARSIKLDLPPFTLIGATTRAGALTSPLRARFGIPLRLEFYNVKDLSSIVTRSANVLELPIDEAGAIELARRSRGTPRIANRLLRRVRDFAEVKHDGEITKQVAELALDMLDIDSEGFDYMDRKLLLAIIDKFMGGPVGLDNLAAAIGEERETIEDVLEPFLIQQGFIQRTPRGRIATDRAYRHFDIIQPEK</sequence>
<protein>
    <recommendedName>
        <fullName evidence="1">Holliday junction branch migration complex subunit RuvB</fullName>
        <ecNumber evidence="1">3.6.4.-</ecNumber>
    </recommendedName>
</protein>
<organism>
    <name type="scientific">Shewanella woodyi (strain ATCC 51908 / MS32)</name>
    <dbReference type="NCBI Taxonomy" id="392500"/>
    <lineage>
        <taxon>Bacteria</taxon>
        <taxon>Pseudomonadati</taxon>
        <taxon>Pseudomonadota</taxon>
        <taxon>Gammaproteobacteria</taxon>
        <taxon>Alteromonadales</taxon>
        <taxon>Shewanellaceae</taxon>
        <taxon>Shewanella</taxon>
    </lineage>
</organism>
<feature type="chain" id="PRO_1000089677" description="Holliday junction branch migration complex subunit RuvB">
    <location>
        <begin position="1"/>
        <end position="338"/>
    </location>
</feature>
<feature type="region of interest" description="Large ATPase domain (RuvB-L)" evidence="1">
    <location>
        <begin position="4"/>
        <end position="187"/>
    </location>
</feature>
<feature type="region of interest" description="Small ATPAse domain (RuvB-S)" evidence="1">
    <location>
        <begin position="188"/>
        <end position="258"/>
    </location>
</feature>
<feature type="region of interest" description="Head domain (RuvB-H)" evidence="1">
    <location>
        <begin position="261"/>
        <end position="338"/>
    </location>
</feature>
<feature type="binding site" evidence="1">
    <location>
        <position position="27"/>
    </location>
    <ligand>
        <name>ATP</name>
        <dbReference type="ChEBI" id="CHEBI:30616"/>
    </ligand>
</feature>
<feature type="binding site" evidence="1">
    <location>
        <position position="68"/>
    </location>
    <ligand>
        <name>ATP</name>
        <dbReference type="ChEBI" id="CHEBI:30616"/>
    </ligand>
</feature>
<feature type="binding site" evidence="1">
    <location>
        <position position="71"/>
    </location>
    <ligand>
        <name>ATP</name>
        <dbReference type="ChEBI" id="CHEBI:30616"/>
    </ligand>
</feature>
<feature type="binding site" evidence="1">
    <location>
        <position position="72"/>
    </location>
    <ligand>
        <name>ATP</name>
        <dbReference type="ChEBI" id="CHEBI:30616"/>
    </ligand>
</feature>
<feature type="binding site" evidence="1">
    <location>
        <position position="72"/>
    </location>
    <ligand>
        <name>Mg(2+)</name>
        <dbReference type="ChEBI" id="CHEBI:18420"/>
    </ligand>
</feature>
<feature type="binding site" evidence="1">
    <location>
        <position position="73"/>
    </location>
    <ligand>
        <name>ATP</name>
        <dbReference type="ChEBI" id="CHEBI:30616"/>
    </ligand>
</feature>
<feature type="binding site" evidence="1">
    <location>
        <begin position="134"/>
        <end position="136"/>
    </location>
    <ligand>
        <name>ATP</name>
        <dbReference type="ChEBI" id="CHEBI:30616"/>
    </ligand>
</feature>
<feature type="binding site" evidence="1">
    <location>
        <position position="177"/>
    </location>
    <ligand>
        <name>ATP</name>
        <dbReference type="ChEBI" id="CHEBI:30616"/>
    </ligand>
</feature>
<feature type="binding site" evidence="1">
    <location>
        <position position="187"/>
    </location>
    <ligand>
        <name>ATP</name>
        <dbReference type="ChEBI" id="CHEBI:30616"/>
    </ligand>
</feature>
<feature type="binding site" evidence="1">
    <location>
        <position position="224"/>
    </location>
    <ligand>
        <name>ATP</name>
        <dbReference type="ChEBI" id="CHEBI:30616"/>
    </ligand>
</feature>
<feature type="binding site" evidence="1">
    <location>
        <position position="297"/>
    </location>
    <ligand>
        <name>DNA</name>
        <dbReference type="ChEBI" id="CHEBI:16991"/>
    </ligand>
</feature>
<feature type="binding site" evidence="1">
    <location>
        <position position="316"/>
    </location>
    <ligand>
        <name>DNA</name>
        <dbReference type="ChEBI" id="CHEBI:16991"/>
    </ligand>
</feature>
<feature type="binding site" evidence="1">
    <location>
        <position position="321"/>
    </location>
    <ligand>
        <name>DNA</name>
        <dbReference type="ChEBI" id="CHEBI:16991"/>
    </ligand>
</feature>
<comment type="function">
    <text evidence="1">The RuvA-RuvB-RuvC complex processes Holliday junction (HJ) DNA during genetic recombination and DNA repair, while the RuvA-RuvB complex plays an important role in the rescue of blocked DNA replication forks via replication fork reversal (RFR). RuvA specifically binds to HJ cruciform DNA, conferring on it an open structure. The RuvB hexamer acts as an ATP-dependent pump, pulling dsDNA into and through the RuvAB complex. RuvB forms 2 homohexamers on either side of HJ DNA bound by 1 or 2 RuvA tetramers; 4 subunits per hexamer contact DNA at a time. Coordinated motions by a converter formed by DNA-disengaged RuvB subunits stimulates ATP hydrolysis and nucleotide exchange. Immobilization of the converter enables RuvB to convert the ATP-contained energy into a lever motion, pulling 2 nucleotides of DNA out of the RuvA tetramer per ATP hydrolyzed, thus driving DNA branch migration. The RuvB motors rotate together with the DNA substrate, which together with the progressing nucleotide cycle form the mechanistic basis for DNA recombination by continuous HJ branch migration. Branch migration allows RuvC to scan DNA until it finds its consensus sequence, where it cleaves and resolves cruciform DNA.</text>
</comment>
<comment type="catalytic activity">
    <reaction evidence="1">
        <text>ATP + H2O = ADP + phosphate + H(+)</text>
        <dbReference type="Rhea" id="RHEA:13065"/>
        <dbReference type="ChEBI" id="CHEBI:15377"/>
        <dbReference type="ChEBI" id="CHEBI:15378"/>
        <dbReference type="ChEBI" id="CHEBI:30616"/>
        <dbReference type="ChEBI" id="CHEBI:43474"/>
        <dbReference type="ChEBI" id="CHEBI:456216"/>
    </reaction>
</comment>
<comment type="subunit">
    <text evidence="1">Homohexamer. Forms an RuvA(8)-RuvB(12)-Holliday junction (HJ) complex. HJ DNA is sandwiched between 2 RuvA tetramers; dsDNA enters through RuvA and exits via RuvB. An RuvB hexamer assembles on each DNA strand where it exits the tetramer. Each RuvB hexamer is contacted by two RuvA subunits (via domain III) on 2 adjacent RuvB subunits; this complex drives branch migration. In the full resolvosome a probable DNA-RuvA(4)-RuvB(12)-RuvC(2) complex forms which resolves the HJ.</text>
</comment>
<comment type="subcellular location">
    <subcellularLocation>
        <location evidence="1">Cytoplasm</location>
    </subcellularLocation>
</comment>
<comment type="domain">
    <text evidence="1">Has 3 domains, the large (RuvB-L) and small ATPase (RuvB-S) domains and the C-terminal head (RuvB-H) domain. The head domain binds DNA, while the ATPase domains jointly bind ATP, ADP or are empty depending on the state of the subunit in the translocation cycle. During a single DNA translocation step the structure of each domain remains the same, but their relative positions change.</text>
</comment>
<comment type="similarity">
    <text evidence="1">Belongs to the RuvB family.</text>
</comment>